<protein>
    <recommendedName>
        <fullName>Probable quinol oxidase subunit 4</fullName>
        <ecNumber>1.10.3.-</ecNumber>
    </recommendedName>
    <alternativeName>
        <fullName>Quinol oxidase polypeptide IV</fullName>
    </alternativeName>
</protein>
<reference key="1">
    <citation type="journal article" date="2003" name="Mol. Microbiol.">
        <title>Genome-based analysis of virulence genes in a non-biofilm-forming Staphylococcus epidermidis strain (ATCC 12228).</title>
        <authorList>
            <person name="Zhang Y.-Q."/>
            <person name="Ren S.-X."/>
            <person name="Li H.-L."/>
            <person name="Wang Y.-X."/>
            <person name="Fu G."/>
            <person name="Yang J."/>
            <person name="Qin Z.-Q."/>
            <person name="Miao Y.-G."/>
            <person name="Wang W.-Y."/>
            <person name="Chen R.-S."/>
            <person name="Shen Y."/>
            <person name="Chen Z."/>
            <person name="Yuan Z.-H."/>
            <person name="Zhao G.-P."/>
            <person name="Qu D."/>
            <person name="Danchin A."/>
            <person name="Wen Y.-M."/>
        </authorList>
    </citation>
    <scope>NUCLEOTIDE SEQUENCE [LARGE SCALE GENOMIC DNA]</scope>
    <source>
        <strain>ATCC 12228 / FDA PCI 1200</strain>
    </source>
</reference>
<proteinExistence type="inferred from homology"/>
<gene>
    <name type="primary">qoxD</name>
    <name type="ordered locus">SE_0756</name>
</gene>
<accession>Q8CPP9</accession>
<keyword id="KW-1003">Cell membrane</keyword>
<keyword id="KW-0472">Membrane</keyword>
<keyword id="KW-0560">Oxidoreductase</keyword>
<keyword id="KW-0812">Transmembrane</keyword>
<keyword id="KW-1133">Transmembrane helix</keyword>
<dbReference type="EC" id="1.10.3.-"/>
<dbReference type="EMBL" id="AE015929">
    <property type="protein sequence ID" value="AAO04353.1"/>
    <property type="molecule type" value="Genomic_DNA"/>
</dbReference>
<dbReference type="RefSeq" id="NP_764311.1">
    <property type="nucleotide sequence ID" value="NC_004461.1"/>
</dbReference>
<dbReference type="RefSeq" id="WP_001831700.1">
    <property type="nucleotide sequence ID" value="NZ_WBME01000028.1"/>
</dbReference>
<dbReference type="SMR" id="Q8CPP9"/>
<dbReference type="GeneID" id="50019104"/>
<dbReference type="KEGG" id="sep:SE_0756"/>
<dbReference type="PATRIC" id="fig|176280.10.peg.728"/>
<dbReference type="eggNOG" id="COG3125">
    <property type="taxonomic scope" value="Bacteria"/>
</dbReference>
<dbReference type="HOGENOM" id="CLU_140945_2_0_9"/>
<dbReference type="OrthoDB" id="2361460at2"/>
<dbReference type="Proteomes" id="UP000001411">
    <property type="component" value="Chromosome"/>
</dbReference>
<dbReference type="GO" id="GO:0009319">
    <property type="term" value="C:cytochrome o ubiquinol oxidase complex"/>
    <property type="evidence" value="ECO:0007669"/>
    <property type="project" value="TreeGrafter"/>
</dbReference>
<dbReference type="GO" id="GO:0005886">
    <property type="term" value="C:plasma membrane"/>
    <property type="evidence" value="ECO:0007669"/>
    <property type="project" value="UniProtKB-SubCell"/>
</dbReference>
<dbReference type="GO" id="GO:0009486">
    <property type="term" value="F:cytochrome bo3 ubiquinol oxidase activity"/>
    <property type="evidence" value="ECO:0007669"/>
    <property type="project" value="TreeGrafter"/>
</dbReference>
<dbReference type="GO" id="GO:0016682">
    <property type="term" value="F:oxidoreductase activity, acting on diphenols and related substances as donors, oxygen as acceptor"/>
    <property type="evidence" value="ECO:0007669"/>
    <property type="project" value="InterPro"/>
</dbReference>
<dbReference type="GO" id="GO:0015078">
    <property type="term" value="F:proton transmembrane transporter activity"/>
    <property type="evidence" value="ECO:0007669"/>
    <property type="project" value="TreeGrafter"/>
</dbReference>
<dbReference type="GO" id="GO:0019646">
    <property type="term" value="P:aerobic electron transport chain"/>
    <property type="evidence" value="ECO:0007669"/>
    <property type="project" value="TreeGrafter"/>
</dbReference>
<dbReference type="GO" id="GO:0042773">
    <property type="term" value="P:ATP synthesis coupled electron transport"/>
    <property type="evidence" value="ECO:0007669"/>
    <property type="project" value="InterPro"/>
</dbReference>
<dbReference type="GO" id="GO:0015990">
    <property type="term" value="P:electron transport coupled proton transport"/>
    <property type="evidence" value="ECO:0007669"/>
    <property type="project" value="TreeGrafter"/>
</dbReference>
<dbReference type="InterPro" id="IPR005171">
    <property type="entry name" value="Cyt_c_oxidase_su4_prok"/>
</dbReference>
<dbReference type="InterPro" id="IPR050968">
    <property type="entry name" value="Cytochrome_c_oxidase_bac_sub4"/>
</dbReference>
<dbReference type="InterPro" id="IPR014250">
    <property type="entry name" value="QoxD"/>
</dbReference>
<dbReference type="NCBIfam" id="TIGR02901">
    <property type="entry name" value="QoxD"/>
    <property type="match status" value="1"/>
</dbReference>
<dbReference type="PANTHER" id="PTHR36835">
    <property type="entry name" value="CYTOCHROME BO(3) UBIQUINOL OXIDASE SUBUNIT 4"/>
    <property type="match status" value="1"/>
</dbReference>
<dbReference type="PANTHER" id="PTHR36835:SF1">
    <property type="entry name" value="CYTOCHROME BO(3) UBIQUINOL OXIDASE SUBUNIT 4"/>
    <property type="match status" value="1"/>
</dbReference>
<dbReference type="Pfam" id="PF03626">
    <property type="entry name" value="COX4_pro"/>
    <property type="match status" value="1"/>
</dbReference>
<name>QOX4_STAES</name>
<evidence type="ECO:0000250" key="1"/>
<evidence type="ECO:0000255" key="2"/>
<evidence type="ECO:0000305" key="3"/>
<sequence length="96" mass="10689">MNTIVKHTVGFIASIVLTLLAVFVTLYTNMTFHAKVTIIFGFAFIQAALQLLMFMHLTEGKDGRLQSFKVIFAIIITLVTVIGTYWVMQGGHSSHL</sequence>
<organism>
    <name type="scientific">Staphylococcus epidermidis (strain ATCC 12228 / FDA PCI 1200)</name>
    <dbReference type="NCBI Taxonomy" id="176280"/>
    <lineage>
        <taxon>Bacteria</taxon>
        <taxon>Bacillati</taxon>
        <taxon>Bacillota</taxon>
        <taxon>Bacilli</taxon>
        <taxon>Bacillales</taxon>
        <taxon>Staphylococcaceae</taxon>
        <taxon>Staphylococcus</taxon>
    </lineage>
</organism>
<feature type="chain" id="PRO_0000275866" description="Probable quinol oxidase subunit 4">
    <location>
        <begin position="1"/>
        <end position="96"/>
    </location>
</feature>
<feature type="transmembrane region" description="Helical" evidence="2">
    <location>
        <begin position="8"/>
        <end position="28"/>
    </location>
</feature>
<feature type="transmembrane region" description="Helical" evidence="2">
    <location>
        <begin position="36"/>
        <end position="56"/>
    </location>
</feature>
<feature type="transmembrane region" description="Helical" evidence="2">
    <location>
        <begin position="68"/>
        <end position="88"/>
    </location>
</feature>
<comment type="function">
    <text evidence="1">Catalyzes quinol oxidation with the concomitant reduction of oxygen to water.</text>
</comment>
<comment type="catalytic activity">
    <reaction>
        <text>2 a quinol + O2 = 2 a quinone + 2 H2O</text>
        <dbReference type="Rhea" id="RHEA:55376"/>
        <dbReference type="ChEBI" id="CHEBI:15377"/>
        <dbReference type="ChEBI" id="CHEBI:15379"/>
        <dbReference type="ChEBI" id="CHEBI:24646"/>
        <dbReference type="ChEBI" id="CHEBI:132124"/>
    </reaction>
</comment>
<comment type="subcellular location">
    <subcellularLocation>
        <location evidence="1">Cell membrane</location>
        <topology evidence="1">Multi-pass membrane protein</topology>
    </subcellularLocation>
</comment>
<comment type="similarity">
    <text evidence="3">Belongs to the cytochrome c oxidase bacterial subunit 4 family.</text>
</comment>